<proteinExistence type="inferred from homology"/>
<organism>
    <name type="scientific">Methanocaldococcus jannaschii (strain ATCC 43067 / DSM 2661 / JAL-1 / JCM 10045 / NBRC 100440)</name>
    <name type="common">Methanococcus jannaschii</name>
    <dbReference type="NCBI Taxonomy" id="243232"/>
    <lineage>
        <taxon>Archaea</taxon>
        <taxon>Methanobacteriati</taxon>
        <taxon>Methanobacteriota</taxon>
        <taxon>Methanomada group</taxon>
        <taxon>Methanococci</taxon>
        <taxon>Methanococcales</taxon>
        <taxon>Methanocaldococcaceae</taxon>
        <taxon>Methanocaldococcus</taxon>
    </lineage>
</organism>
<keyword id="KW-0067">ATP-binding</keyword>
<keyword id="KW-0324">Glycolysis</keyword>
<keyword id="KW-0418">Kinase</keyword>
<keyword id="KW-0460">Magnesium</keyword>
<keyword id="KW-0479">Metal-binding</keyword>
<keyword id="KW-0547">Nucleotide-binding</keyword>
<keyword id="KW-0630">Potassium</keyword>
<keyword id="KW-0670">Pyruvate</keyword>
<keyword id="KW-1185">Reference proteome</keyword>
<keyword id="KW-0808">Transferase</keyword>
<evidence type="ECO:0000250" key="1"/>
<evidence type="ECO:0000250" key="2">
    <source>
        <dbReference type="UniProtKB" id="P14618"/>
    </source>
</evidence>
<evidence type="ECO:0000305" key="3"/>
<comment type="catalytic activity">
    <reaction>
        <text>pyruvate + ATP = phosphoenolpyruvate + ADP + H(+)</text>
        <dbReference type="Rhea" id="RHEA:18157"/>
        <dbReference type="ChEBI" id="CHEBI:15361"/>
        <dbReference type="ChEBI" id="CHEBI:15378"/>
        <dbReference type="ChEBI" id="CHEBI:30616"/>
        <dbReference type="ChEBI" id="CHEBI:58702"/>
        <dbReference type="ChEBI" id="CHEBI:456216"/>
        <dbReference type="EC" id="2.7.1.40"/>
    </reaction>
</comment>
<comment type="cofactor">
    <cofactor evidence="1">
        <name>Mg(2+)</name>
        <dbReference type="ChEBI" id="CHEBI:18420"/>
    </cofactor>
</comment>
<comment type="cofactor">
    <cofactor evidence="1">
        <name>K(+)</name>
        <dbReference type="ChEBI" id="CHEBI:29103"/>
    </cofactor>
</comment>
<comment type="pathway">
    <text>Carbohydrate degradation; glycolysis; pyruvate from D-glyceraldehyde 3-phosphate: step 5/5.</text>
</comment>
<comment type="subunit">
    <text evidence="1">Homotetramer.</text>
</comment>
<comment type="similarity">
    <text evidence="3">Belongs to the pyruvate kinase family.</text>
</comment>
<gene>
    <name type="ordered locus">MJ0108</name>
</gene>
<protein>
    <recommendedName>
        <fullName>Pyruvate kinase</fullName>
        <shortName>PK</shortName>
        <ecNumber>2.7.1.40</ecNumber>
    </recommendedName>
</protein>
<feature type="chain" id="PRO_0000112128" description="Pyruvate kinase">
    <location>
        <begin position="1"/>
        <end position="447"/>
    </location>
</feature>
<feature type="binding site" evidence="1">
    <location>
        <position position="33"/>
    </location>
    <ligand>
        <name>substrate</name>
    </ligand>
</feature>
<feature type="binding site" evidence="2">
    <location>
        <begin position="35"/>
        <end position="38"/>
    </location>
    <ligand>
        <name>ATP</name>
        <dbReference type="ChEBI" id="CHEBI:30616"/>
    </ligand>
</feature>
<feature type="binding site" evidence="1">
    <location>
        <position position="35"/>
    </location>
    <ligand>
        <name>K(+)</name>
        <dbReference type="ChEBI" id="CHEBI:29103"/>
    </ligand>
</feature>
<feature type="binding site" evidence="1">
    <location>
        <position position="37"/>
    </location>
    <ligand>
        <name>K(+)</name>
        <dbReference type="ChEBI" id="CHEBI:29103"/>
    </ligand>
</feature>
<feature type="binding site" evidence="1">
    <location>
        <position position="61"/>
    </location>
    <ligand>
        <name>K(+)</name>
        <dbReference type="ChEBI" id="CHEBI:29103"/>
    </ligand>
</feature>
<feature type="binding site" evidence="2">
    <location>
        <position position="68"/>
    </location>
    <ligand>
        <name>ATP</name>
        <dbReference type="ChEBI" id="CHEBI:30616"/>
    </ligand>
</feature>
<feature type="binding site" evidence="1">
    <location>
        <position position="203"/>
    </location>
    <ligand>
        <name>Mg(2+)</name>
        <dbReference type="ChEBI" id="CHEBI:18420"/>
    </ligand>
</feature>
<feature type="binding site" evidence="1">
    <location>
        <position position="226"/>
    </location>
    <ligand>
        <name>substrate</name>
    </ligand>
</feature>
<feature type="binding site" evidence="1">
    <location>
        <position position="227"/>
    </location>
    <ligand>
        <name>Mg(2+)</name>
        <dbReference type="ChEBI" id="CHEBI:18420"/>
    </ligand>
</feature>
<feature type="binding site" evidence="1">
    <location>
        <position position="227"/>
    </location>
    <ligand>
        <name>substrate</name>
    </ligand>
</feature>
<feature type="binding site" evidence="1">
    <location>
        <position position="259"/>
    </location>
    <ligand>
        <name>substrate</name>
    </ligand>
</feature>
<feature type="site" description="Transition state stabilizer" evidence="1">
    <location>
        <position position="201"/>
    </location>
</feature>
<name>KPYK_METJA</name>
<reference key="1">
    <citation type="journal article" date="1996" name="Science">
        <title>Complete genome sequence of the methanogenic archaeon, Methanococcus jannaschii.</title>
        <authorList>
            <person name="Bult C.J."/>
            <person name="White O."/>
            <person name="Olsen G.J."/>
            <person name="Zhou L."/>
            <person name="Fleischmann R.D."/>
            <person name="Sutton G.G."/>
            <person name="Blake J.A."/>
            <person name="FitzGerald L.M."/>
            <person name="Clayton R.A."/>
            <person name="Gocayne J.D."/>
            <person name="Kerlavage A.R."/>
            <person name="Dougherty B.A."/>
            <person name="Tomb J.-F."/>
            <person name="Adams M.D."/>
            <person name="Reich C.I."/>
            <person name="Overbeek R."/>
            <person name="Kirkness E.F."/>
            <person name="Weinstock K.G."/>
            <person name="Merrick J.M."/>
            <person name="Glodek A."/>
            <person name="Scott J.L."/>
            <person name="Geoghagen N.S.M."/>
            <person name="Weidman J.F."/>
            <person name="Fuhrmann J.L."/>
            <person name="Nguyen D."/>
            <person name="Utterback T.R."/>
            <person name="Kelley J.M."/>
            <person name="Peterson J.D."/>
            <person name="Sadow P.W."/>
            <person name="Hanna M.C."/>
            <person name="Cotton M.D."/>
            <person name="Roberts K.M."/>
            <person name="Hurst M.A."/>
            <person name="Kaine B.P."/>
            <person name="Borodovsky M."/>
            <person name="Klenk H.-P."/>
            <person name="Fraser C.M."/>
            <person name="Smith H.O."/>
            <person name="Woese C.R."/>
            <person name="Venter J.C."/>
        </authorList>
    </citation>
    <scope>NUCLEOTIDE SEQUENCE [LARGE SCALE GENOMIC DNA]</scope>
    <source>
        <strain>ATCC 43067 / DSM 2661 / JAL-1 / JCM 10045 / NBRC 100440</strain>
    </source>
</reference>
<accession>Q57572</accession>
<sequence length="447" mass="50490">MVGMMRKTKILVTLGPSLENKLDKAINLIDGVRFNMSHATTDYCEKFLNILEKNNIAKVMDLKGIKIRIKEVKLKNKILKMGEKVVIGEDIKLNYNIDTIEEGHFILINDGKIKLRVVEKTDKIIAVVEVGGEIKEGMGVNLPDTRIELPIIDETDLKNIKFAVEKDFEYIALSFVRNKEDVKELKDIISEYKGDCEVISKIETKEGLKNIKEIARESDGVMVARGDLGVEVPIENIPIEQKNILRIANRYGILSITATQILDSMINNPFPTRAEVTDIANAIYDGTDCLMLSNETTIGKYPIEAIKVLNKVAKVADEHYEEFGDRVCLEVESIDEGLVYAVYELYKKLNTKLVITPTYSGRTAKLISKLRINSKIIAPTPNIRTLKRLRLVWGVESCLMEEFDDMEKIINTCREMAKKEIGKGIYLITLGHPIGQKKTNTIKVESI</sequence>
<dbReference type="EC" id="2.7.1.40"/>
<dbReference type="EMBL" id="L77117">
    <property type="protein sequence ID" value="AAB98090.1"/>
    <property type="molecule type" value="Genomic_DNA"/>
</dbReference>
<dbReference type="PIR" id="D64313">
    <property type="entry name" value="D64313"/>
</dbReference>
<dbReference type="SMR" id="Q57572"/>
<dbReference type="FunCoup" id="Q57572">
    <property type="interactions" value="174"/>
</dbReference>
<dbReference type="STRING" id="243232.MJ_0108"/>
<dbReference type="PaxDb" id="243232-MJ_0108"/>
<dbReference type="EnsemblBacteria" id="AAB98090">
    <property type="protein sequence ID" value="AAB98090"/>
    <property type="gene ID" value="MJ_0108"/>
</dbReference>
<dbReference type="KEGG" id="mja:MJ_0108"/>
<dbReference type="eggNOG" id="arCOG04120">
    <property type="taxonomic scope" value="Archaea"/>
</dbReference>
<dbReference type="HOGENOM" id="CLU_015439_8_0_2"/>
<dbReference type="InParanoid" id="Q57572"/>
<dbReference type="PhylomeDB" id="Q57572"/>
<dbReference type="UniPathway" id="UPA00109">
    <property type="reaction ID" value="UER00188"/>
</dbReference>
<dbReference type="Proteomes" id="UP000000805">
    <property type="component" value="Chromosome"/>
</dbReference>
<dbReference type="GO" id="GO:0005737">
    <property type="term" value="C:cytoplasm"/>
    <property type="evidence" value="ECO:0000318"/>
    <property type="project" value="GO_Central"/>
</dbReference>
<dbReference type="GO" id="GO:0005829">
    <property type="term" value="C:cytosol"/>
    <property type="evidence" value="ECO:0000318"/>
    <property type="project" value="GO_Central"/>
</dbReference>
<dbReference type="GO" id="GO:0005524">
    <property type="term" value="F:ATP binding"/>
    <property type="evidence" value="ECO:0007669"/>
    <property type="project" value="UniProtKB-KW"/>
</dbReference>
<dbReference type="GO" id="GO:0016301">
    <property type="term" value="F:kinase activity"/>
    <property type="evidence" value="ECO:0007669"/>
    <property type="project" value="UniProtKB-KW"/>
</dbReference>
<dbReference type="GO" id="GO:0000287">
    <property type="term" value="F:magnesium ion binding"/>
    <property type="evidence" value="ECO:0007669"/>
    <property type="project" value="InterPro"/>
</dbReference>
<dbReference type="GO" id="GO:0030955">
    <property type="term" value="F:potassium ion binding"/>
    <property type="evidence" value="ECO:0007669"/>
    <property type="project" value="InterPro"/>
</dbReference>
<dbReference type="GO" id="GO:0004743">
    <property type="term" value="F:pyruvate kinase activity"/>
    <property type="evidence" value="ECO:0000318"/>
    <property type="project" value="GO_Central"/>
</dbReference>
<dbReference type="GO" id="GO:0006096">
    <property type="term" value="P:glycolytic process"/>
    <property type="evidence" value="ECO:0000318"/>
    <property type="project" value="GO_Central"/>
</dbReference>
<dbReference type="FunFam" id="3.40.1380.20:FF:000043">
    <property type="entry name" value="Pyruvate kinase"/>
    <property type="match status" value="1"/>
</dbReference>
<dbReference type="Gene3D" id="3.20.20.60">
    <property type="entry name" value="Phosphoenolpyruvate-binding domains"/>
    <property type="match status" value="1"/>
</dbReference>
<dbReference type="Gene3D" id="2.40.33.10">
    <property type="entry name" value="PK beta-barrel domain-like"/>
    <property type="match status" value="1"/>
</dbReference>
<dbReference type="Gene3D" id="3.40.1380.20">
    <property type="entry name" value="Pyruvate kinase, C-terminal domain"/>
    <property type="match status" value="1"/>
</dbReference>
<dbReference type="InterPro" id="IPR001697">
    <property type="entry name" value="Pyr_Knase"/>
</dbReference>
<dbReference type="InterPro" id="IPR015813">
    <property type="entry name" value="Pyrv/PenolPyrv_kinase-like_dom"/>
</dbReference>
<dbReference type="InterPro" id="IPR040442">
    <property type="entry name" value="Pyrv_kinase-like_dom_sf"/>
</dbReference>
<dbReference type="InterPro" id="IPR011037">
    <property type="entry name" value="Pyrv_Knase-like_insert_dom_sf"/>
</dbReference>
<dbReference type="InterPro" id="IPR018209">
    <property type="entry name" value="Pyrv_Knase_AS"/>
</dbReference>
<dbReference type="InterPro" id="IPR015793">
    <property type="entry name" value="Pyrv_Knase_brl"/>
</dbReference>
<dbReference type="InterPro" id="IPR015795">
    <property type="entry name" value="Pyrv_Knase_C"/>
</dbReference>
<dbReference type="InterPro" id="IPR036918">
    <property type="entry name" value="Pyrv_Knase_C_sf"/>
</dbReference>
<dbReference type="InterPro" id="IPR015806">
    <property type="entry name" value="Pyrv_Knase_insert_dom_sf"/>
</dbReference>
<dbReference type="NCBIfam" id="TIGR01064">
    <property type="entry name" value="pyruv_kin"/>
    <property type="match status" value="1"/>
</dbReference>
<dbReference type="PANTHER" id="PTHR11817">
    <property type="entry name" value="PYRUVATE KINASE"/>
    <property type="match status" value="1"/>
</dbReference>
<dbReference type="Pfam" id="PF00224">
    <property type="entry name" value="PK"/>
    <property type="match status" value="1"/>
</dbReference>
<dbReference type="Pfam" id="PF02887">
    <property type="entry name" value="PK_C"/>
    <property type="match status" value="1"/>
</dbReference>
<dbReference type="PRINTS" id="PR01050">
    <property type="entry name" value="PYRUVTKNASE"/>
</dbReference>
<dbReference type="SUPFAM" id="SSF51621">
    <property type="entry name" value="Phosphoenolpyruvate/pyruvate domain"/>
    <property type="match status" value="1"/>
</dbReference>
<dbReference type="SUPFAM" id="SSF50800">
    <property type="entry name" value="PK beta-barrel domain-like"/>
    <property type="match status" value="1"/>
</dbReference>
<dbReference type="SUPFAM" id="SSF52935">
    <property type="entry name" value="PK C-terminal domain-like"/>
    <property type="match status" value="1"/>
</dbReference>
<dbReference type="PROSITE" id="PS00110">
    <property type="entry name" value="PYRUVATE_KINASE"/>
    <property type="match status" value="1"/>
</dbReference>